<accession>P0CS97</accession>
<accession>Q8ST70</accession>
<comment type="similarity">
    <text evidence="2">Belongs to the UPF0328 family.</text>
</comment>
<dbReference type="EMBL" id="AL590449">
    <property type="protein sequence ID" value="CAD25908.2"/>
    <property type="molecule type" value="Genomic_DNA"/>
</dbReference>
<dbReference type="RefSeq" id="NP_586304.2">
    <property type="nucleotide sequence ID" value="NM_001042137.2"/>
</dbReference>
<dbReference type="GeneID" id="859955"/>
<dbReference type="KEGG" id="ecu:ECU10_1870"/>
<dbReference type="VEuPathDB" id="MicrosporidiaDB:ECU10_1870"/>
<dbReference type="HOGENOM" id="CLU_612531_0_0_1"/>
<dbReference type="InParanoid" id="P0CS97"/>
<dbReference type="Proteomes" id="UP000000819">
    <property type="component" value="Chromosome X"/>
</dbReference>
<dbReference type="InterPro" id="IPR019081">
    <property type="entry name" value="UPF0328"/>
</dbReference>
<dbReference type="Pfam" id="PF09591">
    <property type="entry name" value="DUF2463"/>
    <property type="match status" value="1"/>
</dbReference>
<proteinExistence type="inferred from homology"/>
<name>YAI7_ENCCU</name>
<protein>
    <recommendedName>
        <fullName>UPF0328 protein ECU10_1870</fullName>
    </recommendedName>
</protein>
<sequence>MPSDHPDFRSKSARLRCQPPRTNNCGTFKQPPSVAATSRPKPGNPFLQPPTKGTPPPKKKKKNHTEGCHTHEANPEPNTKHTETEPPIISHCPPPHPGPTATPNLLPCPNPTSSFCQNTRDSPSLPPNVQTWSIFPKHPSKDVTAQVKSQSVSHRAPITYQPPRPTTTSNPRISQSYHMKSISSYLSFAHMNITHTTEQHAENQPHWKTILDIAPFVSITFPAIMCLIFDEDSFEESPFLRFITLLLPFSYSAVQYALLYTNWKSHNKPEPILHTTLYYTLSLLLLAFTIISILSIIPFSLNEWDHAASFFYPIVLPSFTVPPAYLLSSSYFLVPRQIRLTDTVISILISVCSIVNVLLVFKEFNYYPYSAIISSISVLLQLLSEKHCLFKQSPPSTASSRAAVLILTLILAVLVYTFLGYGAIYILDDHFHLLGKMKSILPSEPHQ</sequence>
<gene>
    <name type="ordered locus">ECU10_1870</name>
</gene>
<organism>
    <name type="scientific">Encephalitozoon cuniculi (strain GB-M1)</name>
    <name type="common">Microsporidian parasite</name>
    <dbReference type="NCBI Taxonomy" id="284813"/>
    <lineage>
        <taxon>Eukaryota</taxon>
        <taxon>Fungi</taxon>
        <taxon>Fungi incertae sedis</taxon>
        <taxon>Microsporidia</taxon>
        <taxon>Unikaryonidae</taxon>
        <taxon>Encephalitozoon</taxon>
    </lineage>
</organism>
<feature type="chain" id="PRO_0000422374" description="UPF0328 protein ECU10_1870">
    <location>
        <begin position="1"/>
        <end position="447"/>
    </location>
</feature>
<feature type="region of interest" description="Disordered" evidence="1">
    <location>
        <begin position="1"/>
        <end position="103"/>
    </location>
</feature>
<feature type="region of interest" description="Disordered" evidence="1">
    <location>
        <begin position="147"/>
        <end position="173"/>
    </location>
</feature>
<feature type="compositionally biased region" description="Basic and acidic residues" evidence="1">
    <location>
        <begin position="1"/>
        <end position="10"/>
    </location>
</feature>
<feature type="compositionally biased region" description="Basic and acidic residues" evidence="1">
    <location>
        <begin position="64"/>
        <end position="84"/>
    </location>
</feature>
<feature type="compositionally biased region" description="Pro residues" evidence="1">
    <location>
        <begin position="92"/>
        <end position="103"/>
    </location>
</feature>
<evidence type="ECO:0000256" key="1">
    <source>
        <dbReference type="SAM" id="MobiDB-lite"/>
    </source>
</evidence>
<evidence type="ECO:0000305" key="2"/>
<keyword id="KW-1185">Reference proteome</keyword>
<reference key="1">
    <citation type="journal article" date="2001" name="Nature">
        <title>Genome sequence and gene compaction of the eukaryote parasite Encephalitozoon cuniculi.</title>
        <authorList>
            <person name="Katinka M.D."/>
            <person name="Duprat S."/>
            <person name="Cornillot E."/>
            <person name="Metenier G."/>
            <person name="Thomarat F."/>
            <person name="Prensier G."/>
            <person name="Barbe V."/>
            <person name="Peyretaillade E."/>
            <person name="Brottier P."/>
            <person name="Wincker P."/>
            <person name="Delbac F."/>
            <person name="El Alaoui H."/>
            <person name="Peyret P."/>
            <person name="Saurin W."/>
            <person name="Gouy M."/>
            <person name="Weissenbach J."/>
            <person name="Vivares C.P."/>
        </authorList>
    </citation>
    <scope>NUCLEOTIDE SEQUENCE [LARGE SCALE GENOMIC DNA]</scope>
    <source>
        <strain>GB-M1</strain>
    </source>
</reference>
<reference key="2">
    <citation type="journal article" date="2009" name="BMC Genomics">
        <title>Identification of transcriptional signals in Encephalitozoon cuniculi widespread among Microsporidia phylum: support for accurate structural genome annotation.</title>
        <authorList>
            <person name="Peyretaillade E."/>
            <person name="Goncalves O."/>
            <person name="Terrat S."/>
            <person name="Dugat-Bony E."/>
            <person name="Wincker P."/>
            <person name="Cornman R.S."/>
            <person name="Evans J.D."/>
            <person name="Delbac F."/>
            <person name="Peyret P."/>
        </authorList>
    </citation>
    <scope>GENOME REANNOTATION</scope>
    <source>
        <strain>GB-M1</strain>
    </source>
</reference>